<name>FER4_RHOCB</name>
<protein>
    <recommendedName>
        <fullName>Ferredoxin-4</fullName>
    </recommendedName>
    <alternativeName>
        <fullName>Ferredoxin IV</fullName>
        <shortName>FdIV</shortName>
    </alternativeName>
    <alternativeName>
        <fullName>Ferredoxin, plant-type</fullName>
    </alternativeName>
</protein>
<gene>
    <name type="primary">fdxC</name>
    <name type="synonym">ptfA</name>
    <name type="ordered locus">RCAP_rcc03285</name>
</gene>
<dbReference type="EMBL" id="X51316">
    <property type="protein sequence ID" value="CAA35698.1"/>
    <property type="molecule type" value="Genomic_DNA"/>
</dbReference>
<dbReference type="EMBL" id="CP001312">
    <property type="protein sequence ID" value="ADE87009.1"/>
    <property type="molecule type" value="Genomic_DNA"/>
</dbReference>
<dbReference type="PIR" id="S08393">
    <property type="entry name" value="FERFNC"/>
</dbReference>
<dbReference type="RefSeq" id="WP_013068981.1">
    <property type="nucleotide sequence ID" value="NC_014034.1"/>
</dbReference>
<dbReference type="SMR" id="D5ARY7"/>
<dbReference type="STRING" id="272942.RCAP_rcc03285"/>
<dbReference type="GeneID" id="31492065"/>
<dbReference type="KEGG" id="rcp:RCAP_rcc03285"/>
<dbReference type="eggNOG" id="COG0633">
    <property type="taxonomic scope" value="Bacteria"/>
</dbReference>
<dbReference type="HOGENOM" id="CLU_082632_8_1_5"/>
<dbReference type="OrthoDB" id="9806195at2"/>
<dbReference type="Proteomes" id="UP000002361">
    <property type="component" value="Chromosome"/>
</dbReference>
<dbReference type="GO" id="GO:0051537">
    <property type="term" value="F:2 iron, 2 sulfur cluster binding"/>
    <property type="evidence" value="ECO:0007669"/>
    <property type="project" value="UniProtKB-KW"/>
</dbReference>
<dbReference type="GO" id="GO:0046872">
    <property type="term" value="F:metal ion binding"/>
    <property type="evidence" value="ECO:0007669"/>
    <property type="project" value="UniProtKB-KW"/>
</dbReference>
<dbReference type="GO" id="GO:0009399">
    <property type="term" value="P:nitrogen fixation"/>
    <property type="evidence" value="ECO:0007669"/>
    <property type="project" value="UniProtKB-KW"/>
</dbReference>
<dbReference type="CDD" id="cd00207">
    <property type="entry name" value="fer2"/>
    <property type="match status" value="1"/>
</dbReference>
<dbReference type="Gene3D" id="3.10.20.30">
    <property type="match status" value="1"/>
</dbReference>
<dbReference type="InterPro" id="IPR036010">
    <property type="entry name" value="2Fe-2S_ferredoxin-like_sf"/>
</dbReference>
<dbReference type="InterPro" id="IPR001041">
    <property type="entry name" value="2Fe-2S_ferredoxin-type"/>
</dbReference>
<dbReference type="InterPro" id="IPR006058">
    <property type="entry name" value="2Fe2S_fd_BS"/>
</dbReference>
<dbReference type="InterPro" id="IPR012675">
    <property type="entry name" value="Beta-grasp_dom_sf"/>
</dbReference>
<dbReference type="Pfam" id="PF00111">
    <property type="entry name" value="Fer2"/>
    <property type="match status" value="1"/>
</dbReference>
<dbReference type="SUPFAM" id="SSF54292">
    <property type="entry name" value="2Fe-2S ferredoxin-like"/>
    <property type="match status" value="1"/>
</dbReference>
<dbReference type="PROSITE" id="PS00197">
    <property type="entry name" value="2FE2S_FER_1"/>
    <property type="match status" value="1"/>
</dbReference>
<dbReference type="PROSITE" id="PS51085">
    <property type="entry name" value="2FE2S_FER_2"/>
    <property type="match status" value="1"/>
</dbReference>
<evidence type="ECO:0000255" key="1">
    <source>
        <dbReference type="PROSITE-ProRule" id="PRU00465"/>
    </source>
</evidence>
<evidence type="ECO:0000269" key="2">
    <source>
    </source>
</evidence>
<evidence type="ECO:0000305" key="3"/>
<sequence>MDKATLTFTDVSITVNVPTGTRIIEMSEKVGSGITYGCREGECGTCMTHILEGSENLSEPTALEMRVLEENLGGKDDRLACQCRVLGGAVKVRPA</sequence>
<organism>
    <name type="scientific">Rhodobacter capsulatus (strain ATCC BAA-309 / NBRC 16581 / SB1003)</name>
    <dbReference type="NCBI Taxonomy" id="272942"/>
    <lineage>
        <taxon>Bacteria</taxon>
        <taxon>Pseudomonadati</taxon>
        <taxon>Pseudomonadota</taxon>
        <taxon>Alphaproteobacteria</taxon>
        <taxon>Rhodobacterales</taxon>
        <taxon>Rhodobacter group</taxon>
        <taxon>Rhodobacter</taxon>
    </lineage>
</organism>
<feature type="chain" id="PRO_0000410437" description="Ferredoxin-4">
    <location>
        <begin position="1"/>
        <end position="95"/>
    </location>
</feature>
<feature type="domain" description="2Fe-2S ferredoxin-type" evidence="1">
    <location>
        <begin position="2"/>
        <end position="95"/>
    </location>
</feature>
<feature type="binding site" evidence="1">
    <location>
        <position position="38"/>
    </location>
    <ligand>
        <name>[2Fe-2S] cluster</name>
        <dbReference type="ChEBI" id="CHEBI:190135"/>
    </ligand>
</feature>
<feature type="binding site" evidence="1">
    <location>
        <position position="43"/>
    </location>
    <ligand>
        <name>[2Fe-2S] cluster</name>
        <dbReference type="ChEBI" id="CHEBI:190135"/>
    </ligand>
</feature>
<feature type="binding site" evidence="1">
    <location>
        <position position="46"/>
    </location>
    <ligand>
        <name>[2Fe-2S] cluster</name>
        <dbReference type="ChEBI" id="CHEBI:190135"/>
    </ligand>
</feature>
<feature type="binding site" evidence="1">
    <location>
        <position position="81"/>
    </location>
    <ligand>
        <name>[2Fe-2S] cluster</name>
        <dbReference type="ChEBI" id="CHEBI:190135"/>
    </ligand>
</feature>
<keyword id="KW-0001">2Fe-2S</keyword>
<keyword id="KW-0249">Electron transport</keyword>
<keyword id="KW-0408">Iron</keyword>
<keyword id="KW-0411">Iron-sulfur</keyword>
<keyword id="KW-0479">Metal-binding</keyword>
<keyword id="KW-0535">Nitrogen fixation</keyword>
<keyword id="KW-1185">Reference proteome</keyword>
<keyword id="KW-0813">Transport</keyword>
<proteinExistence type="inferred from homology"/>
<reference key="1">
    <citation type="journal article" date="1990" name="Nucleic Acids Res.">
        <title>A plant-ferredoxin-like gene is located upstream of ferredoxin I gene (fdxN) of Rhodobacter capsulatus.</title>
        <authorList>
            <person name="Saeki K."/>
            <person name="Miyatake Y."/>
            <person name="Young D.A."/>
            <person name="Marrs B."/>
            <person name="Matsubara H."/>
        </authorList>
    </citation>
    <scope>NUCLEOTIDE SEQUENCE [GENOMIC DNA]</scope>
    <source>
        <strain>ATCC BAA-309 / NBRC 16581 / SB1003</strain>
    </source>
</reference>
<reference key="2">
    <citation type="journal article" date="2010" name="J. Bacteriol.">
        <title>Complete genome sequence of the photosynthetic purple nonsulfur bacterium Rhodobacter capsulatus SB 1003.</title>
        <authorList>
            <person name="Strnad H."/>
            <person name="Lapidus A."/>
            <person name="Paces J."/>
            <person name="Ulbrich P."/>
            <person name="Vlcek C."/>
            <person name="Paces V."/>
            <person name="Haselkorn R."/>
        </authorList>
    </citation>
    <scope>NUCLEOTIDE SEQUENCE [LARGE SCALE GENOMIC DNA]</scope>
    <source>
        <strain>ATCC BAA-309 / NBRC 16581 / SB1003</strain>
    </source>
</reference>
<reference key="3">
    <citation type="journal article" date="1991" name="J. Biol. Chem.">
        <title>Genetic analysis of functional differences among distinct ferredoxins in Rhodobacter capsulatus.</title>
        <authorList>
            <person name="Saeki K."/>
            <person name="Suetsugu Y."/>
            <person name="Tokuda K."/>
            <person name="Miyatake Y."/>
            <person name="Young D.A."/>
            <person name="Marrs B.L."/>
            <person name="Matsubara H."/>
        </authorList>
    </citation>
    <scope>ROLE IN NITROGEN FIXATION</scope>
    <source>
        <strain>ATCC BAA-309 / NBRC 16581 / SB1003</strain>
    </source>
</reference>
<accession>D5ARY7</accession>
<accession>P16022</accession>
<comment type="function">
    <text evidence="2">Ferredoxins are iron-sulfur proteins that transfer electrons in a wide variety of metabolic reactions. This ferredoxin is required for nitrogen fixation.</text>
</comment>
<comment type="cofactor">
    <cofactor evidence="3">
        <name>[2Fe-2S] cluster</name>
        <dbReference type="ChEBI" id="CHEBI:190135"/>
    </cofactor>
    <text evidence="3">Binds 1 [2Fe-2S] cluster.</text>
</comment>
<comment type="similarity">
    <text evidence="3">Belongs to the 2Fe2S plant-type ferredoxin family.</text>
</comment>